<proteinExistence type="evidence at protein level"/>
<keyword id="KW-0808">Transferase</keyword>
<feature type="chain" id="PRO_0000460924" description="Mogroside IIIx synthase">
    <location>
        <begin position="1"/>
        <end position="473"/>
    </location>
</feature>
<feature type="active site" description="Proton acceptor" evidence="1">
    <location>
        <position position="21"/>
    </location>
</feature>
<feature type="active site" description="Charge relay" evidence="1">
    <location>
        <position position="123"/>
    </location>
</feature>
<feature type="binding site" evidence="2">
    <location>
        <position position="274"/>
    </location>
    <ligand>
        <name>UDP-alpha-D-glucose</name>
        <dbReference type="ChEBI" id="CHEBI:58885"/>
    </ligand>
</feature>
<feature type="binding site" evidence="2">
    <location>
        <position position="337"/>
    </location>
    <ligand>
        <name>UDP-alpha-D-glucose</name>
        <dbReference type="ChEBI" id="CHEBI:58885"/>
    </ligand>
</feature>
<feature type="binding site" evidence="2">
    <location>
        <position position="355"/>
    </location>
    <ligand>
        <name>UDP-alpha-D-glucose</name>
        <dbReference type="ChEBI" id="CHEBI:58885"/>
    </ligand>
</feature>
<feature type="binding site" evidence="2">
    <location>
        <position position="356"/>
    </location>
    <ligand>
        <name>UDP-alpha-D-glucose</name>
        <dbReference type="ChEBI" id="CHEBI:58885"/>
    </ligand>
</feature>
<feature type="binding site" evidence="2">
    <location>
        <position position="357"/>
    </location>
    <ligand>
        <name>UDP-alpha-D-glucose</name>
        <dbReference type="ChEBI" id="CHEBI:58885"/>
    </ligand>
</feature>
<feature type="binding site" evidence="2">
    <location>
        <position position="360"/>
    </location>
    <ligand>
        <name>UDP-alpha-D-glucose</name>
        <dbReference type="ChEBI" id="CHEBI:58885"/>
    </ligand>
</feature>
<feature type="binding site" evidence="2">
    <location>
        <position position="376"/>
    </location>
    <ligand>
        <name>UDP-alpha-D-glucose</name>
        <dbReference type="ChEBI" id="CHEBI:58885"/>
    </ligand>
</feature>
<feature type="binding site" evidence="2">
    <location>
        <position position="377"/>
    </location>
    <ligand>
        <name>UDP-alpha-D-glucose</name>
        <dbReference type="ChEBI" id="CHEBI:58885"/>
    </ligand>
</feature>
<accession>P0DO72</accession>
<organism>
    <name type="scientific">Siraitia grosvenorii</name>
    <name type="common">Monk's fruit</name>
    <name type="synonym">Luo han guo</name>
    <dbReference type="NCBI Taxonomy" id="190515"/>
    <lineage>
        <taxon>Eukaryota</taxon>
        <taxon>Viridiplantae</taxon>
        <taxon>Streptophyta</taxon>
        <taxon>Embryophyta</taxon>
        <taxon>Tracheophyta</taxon>
        <taxon>Spermatophyta</taxon>
        <taxon>Magnoliopsida</taxon>
        <taxon>eudicotyledons</taxon>
        <taxon>Gunneridae</taxon>
        <taxon>Pentapetalae</taxon>
        <taxon>rosids</taxon>
        <taxon>fabids</taxon>
        <taxon>Cucurbitales</taxon>
        <taxon>Cucurbitaceae</taxon>
        <taxon>Siraitieae</taxon>
        <taxon>Siraitia</taxon>
    </lineage>
</organism>
<gene>
    <name evidence="4" type="primary">UGT94-289-2</name>
</gene>
<comment type="function">
    <text evidence="3">UDP-glycosyltransferase involved in the biosynthesis of cucurbitacin and mogroside tetracyclic triterpene natural products (e.g. siamenoside I and mogrosides IV, V and VI) (PubMed:27821754). Cucurbitacins have cytotoxic properties and exhibit deterrent taste as a defense barrier against herbivores (PubMed:27821754). Mogrosides are nonsugar highly oxygenated compounds used as high-intensity zero-calorie sweeteners; they also possess pharmacological properties such as regulating immunity, lowering blood sugar and lipid levels, protecting the liver, and acting as antioxidants and antitumor agents (PubMed:27821754). Catalyzes the branched glucosylations of mogroside II-E and mogroside III (PubMed:27821754).</text>
</comment>
<comment type="catalytic activity">
    <reaction evidence="3">
        <text>mogroside IIE + UDP-alpha-D-glucose = mogroside IIIX + UDP + H(+)</text>
        <dbReference type="Rhea" id="RHEA:80187"/>
        <dbReference type="ChEBI" id="CHEBI:15378"/>
        <dbReference type="ChEBI" id="CHEBI:58223"/>
        <dbReference type="ChEBI" id="CHEBI:58885"/>
        <dbReference type="ChEBI" id="CHEBI:145198"/>
        <dbReference type="ChEBI" id="CHEBI:229952"/>
    </reaction>
    <physiologicalReaction direction="left-to-right" evidence="3">
        <dbReference type="Rhea" id="RHEA:80188"/>
    </physiologicalReaction>
</comment>
<comment type="catalytic activity">
    <reaction evidence="3">
        <text>mogroside III + UDP-alpha-D-glucose = siamenoside I + UDP + H(+)</text>
        <dbReference type="Rhea" id="RHEA:81927"/>
        <dbReference type="ChEBI" id="CHEBI:15378"/>
        <dbReference type="ChEBI" id="CHEBI:58223"/>
        <dbReference type="ChEBI" id="CHEBI:58885"/>
        <dbReference type="ChEBI" id="CHEBI:228908"/>
        <dbReference type="ChEBI" id="CHEBI:232044"/>
    </reaction>
    <physiologicalReaction direction="left-to-right" evidence="3">
        <dbReference type="Rhea" id="RHEA:81928"/>
    </physiologicalReaction>
</comment>
<comment type="pathway">
    <text evidence="3">Secondary metabolite biosynthesis; terpenoid biosynthesis.</text>
</comment>
<comment type="tissue specificity">
    <text evidence="3">Highly expressed in mature fruits.</text>
</comment>
<comment type="miscellaneous">
    <text evidence="6">Mogrosides, the major active constituents of S.grosvenorii fruits, are a mixture of cucurbitane-type triterpenoid glycosides that have been proven to be powerful and zero-caloric sweeteners and can hence be used as a sucrose substitute for diabetic and obese patients.</text>
</comment>
<comment type="similarity">
    <text evidence="5">Belongs to the UDP-glycosyltransferase family.</text>
</comment>
<reference key="1">
    <citation type="journal article" date="2016" name="Proc. Natl. Acad. Sci. U.S.A.">
        <title>The biosynthetic pathway of the nonsugar, high-intensity sweetener mogroside V from Siraitia grosvenorii.</title>
        <authorList>
            <person name="Itkin M."/>
            <person name="Davidovich-Rikanati R."/>
            <person name="Cohen S."/>
            <person name="Portnoy V."/>
            <person name="Doron-Faigenboim A."/>
            <person name="Oren E."/>
            <person name="Freilich S."/>
            <person name="Tzuri G."/>
            <person name="Baranes N."/>
            <person name="Shen S."/>
            <person name="Petreikov M."/>
            <person name="Sertchook R."/>
            <person name="Ben-Dor S."/>
            <person name="Gottlieb H."/>
            <person name="Hernandez A."/>
            <person name="Nelson D.R."/>
            <person name="Paris H.S."/>
            <person name="Tadmor Y."/>
            <person name="Burger Y."/>
            <person name="Lewinsohn E."/>
            <person name="Katzir N."/>
            <person name="Schaffer A."/>
        </authorList>
    </citation>
    <scope>NUCLEOTIDE SEQUENCE</scope>
    <scope>FUNCTION</scope>
    <scope>CATALYTIC ACTIVITY</scope>
    <scope>PATHWAY</scope>
    <scope>TISSUE SPECIFICITY</scope>
    <scope>GENE FAMILY</scope>
    <scope>NOMENCLATURE</scope>
</reference>
<evidence type="ECO:0000250" key="1">
    <source>
        <dbReference type="UniProtKB" id="A0A0A1HA03"/>
    </source>
</evidence>
<evidence type="ECO:0000250" key="2">
    <source>
        <dbReference type="UniProtKB" id="K7NBW3"/>
    </source>
</evidence>
<evidence type="ECO:0000269" key="3">
    <source>
    </source>
</evidence>
<evidence type="ECO:0000303" key="4">
    <source>
    </source>
</evidence>
<evidence type="ECO:0000305" key="5"/>
<evidence type="ECO:0000305" key="6">
    <source>
    </source>
</evidence>
<dbReference type="EC" id="2.4.1.-" evidence="3"/>
<dbReference type="SMR" id="P0DO72"/>
<dbReference type="UniPathway" id="UPA00213"/>
<dbReference type="GO" id="GO:0008194">
    <property type="term" value="F:UDP-glycosyltransferase activity"/>
    <property type="evidence" value="ECO:0007669"/>
    <property type="project" value="InterPro"/>
</dbReference>
<dbReference type="GO" id="GO:1901137">
    <property type="term" value="P:carbohydrate derivative biosynthetic process"/>
    <property type="evidence" value="ECO:0007669"/>
    <property type="project" value="UniProtKB-ARBA"/>
</dbReference>
<dbReference type="CDD" id="cd03784">
    <property type="entry name" value="GT1_Gtf-like"/>
    <property type="match status" value="1"/>
</dbReference>
<dbReference type="FunFam" id="3.40.50.2000:FF:000060">
    <property type="entry name" value="Glycosyltransferase"/>
    <property type="match status" value="1"/>
</dbReference>
<dbReference type="Gene3D" id="3.40.50.2000">
    <property type="entry name" value="Glycogen Phosphorylase B"/>
    <property type="match status" value="2"/>
</dbReference>
<dbReference type="InterPro" id="IPR002213">
    <property type="entry name" value="UDP_glucos_trans"/>
</dbReference>
<dbReference type="InterPro" id="IPR035595">
    <property type="entry name" value="UDP_glycos_trans_CS"/>
</dbReference>
<dbReference type="PANTHER" id="PTHR48044">
    <property type="entry name" value="GLYCOSYLTRANSFERASE"/>
    <property type="match status" value="1"/>
</dbReference>
<dbReference type="PANTHER" id="PTHR48044:SF29">
    <property type="entry name" value="GLYCOSYLTRANSFERASE"/>
    <property type="match status" value="1"/>
</dbReference>
<dbReference type="Pfam" id="PF00201">
    <property type="entry name" value="UDPGT"/>
    <property type="match status" value="1"/>
</dbReference>
<dbReference type="SUPFAM" id="SSF53756">
    <property type="entry name" value="UDP-Glycosyltransferase/glycogen phosphorylase"/>
    <property type="match status" value="1"/>
</dbReference>
<sequence length="473" mass="53128">MDAQQGHTTTILMLPWVGYGHLLPFLELAKSLSRRKLFHIYFCSTSVSLDAIKPKLPPSISSDDSIQLVELRLPSSPELPPHLHTTNGLPSHLMPALHQAFVMAAQHFQVILQTLAPHLLIYDILQPWAPQVASSLNIPAINFSTTGASMLSRTLHPTHYPSSKFPISEFVLHNHWRAMYTTADGALTEEGHKIEETLANCLHTSCGVVLVNSFRELETKYIDYLSVLLNKKVVPVGPLVYEPNQEGEDEGYSSIKNWLDKKEPSSTVFVSFGTEYFPSKEEMEEIAYGLELSEVNFIWVLRFPQGDSTSTIEDALPKGFLERAGERAMVVKGWAPQAKILKHWSTGGLVSHCGWNSMMEGMMFGVPIIAVPMHLDQPFNAGLVEEAGVGVEAKRDSDGKIQREEVAKSIKEVVIEKTREDVRKKAREMDTKHGPTYFSRSKVSSFGRLYKINRPTTLTVGRFWSKQIKMKRE</sequence>
<name>GT942_SIRGR</name>
<protein>
    <recommendedName>
        <fullName evidence="5">Mogroside IIIx synthase</fullName>
        <ecNumber evidence="3">2.4.1.-</ecNumber>
    </recommendedName>
    <alternativeName>
        <fullName evidence="5">Siamenoside I synthase</fullName>
        <ecNumber evidence="3">2.4.1.-</ecNumber>
    </alternativeName>
    <alternativeName>
        <fullName evidence="4">UDP-glycosyltransferase 94-289-2</fullName>
        <shortName evidence="4">UGT94-289-2</shortName>
    </alternativeName>
</protein>